<dbReference type="EC" id="2.7.4.3" evidence="1"/>
<dbReference type="EMBL" id="CP001130">
    <property type="protein sequence ID" value="ACG56976.1"/>
    <property type="molecule type" value="Genomic_DNA"/>
</dbReference>
<dbReference type="RefSeq" id="WP_012513332.1">
    <property type="nucleotide sequence ID" value="NC_011126.1"/>
</dbReference>
<dbReference type="SMR" id="B4U765"/>
<dbReference type="STRING" id="380749.HY04AAS1_0286"/>
<dbReference type="KEGG" id="hya:HY04AAS1_0286"/>
<dbReference type="eggNOG" id="COG0563">
    <property type="taxonomic scope" value="Bacteria"/>
</dbReference>
<dbReference type="HOGENOM" id="CLU_032354_1_2_0"/>
<dbReference type="UniPathway" id="UPA00588">
    <property type="reaction ID" value="UER00649"/>
</dbReference>
<dbReference type="GO" id="GO:0005737">
    <property type="term" value="C:cytoplasm"/>
    <property type="evidence" value="ECO:0007669"/>
    <property type="project" value="UniProtKB-SubCell"/>
</dbReference>
<dbReference type="GO" id="GO:0004017">
    <property type="term" value="F:adenylate kinase activity"/>
    <property type="evidence" value="ECO:0007669"/>
    <property type="project" value="UniProtKB-UniRule"/>
</dbReference>
<dbReference type="GO" id="GO:0005524">
    <property type="term" value="F:ATP binding"/>
    <property type="evidence" value="ECO:0007669"/>
    <property type="project" value="UniProtKB-UniRule"/>
</dbReference>
<dbReference type="GO" id="GO:0008270">
    <property type="term" value="F:zinc ion binding"/>
    <property type="evidence" value="ECO:0007669"/>
    <property type="project" value="UniProtKB-UniRule"/>
</dbReference>
<dbReference type="GO" id="GO:0044209">
    <property type="term" value="P:AMP salvage"/>
    <property type="evidence" value="ECO:0007669"/>
    <property type="project" value="UniProtKB-UniRule"/>
</dbReference>
<dbReference type="CDD" id="cd01428">
    <property type="entry name" value="ADK"/>
    <property type="match status" value="1"/>
</dbReference>
<dbReference type="FunFam" id="3.40.50.300:FF:000106">
    <property type="entry name" value="Adenylate kinase mitochondrial"/>
    <property type="match status" value="1"/>
</dbReference>
<dbReference type="Gene3D" id="3.40.50.300">
    <property type="entry name" value="P-loop containing nucleotide triphosphate hydrolases"/>
    <property type="match status" value="1"/>
</dbReference>
<dbReference type="HAMAP" id="MF_00235">
    <property type="entry name" value="Adenylate_kinase_Adk"/>
    <property type="match status" value="1"/>
</dbReference>
<dbReference type="InterPro" id="IPR006259">
    <property type="entry name" value="Adenyl_kin_sub"/>
</dbReference>
<dbReference type="InterPro" id="IPR000850">
    <property type="entry name" value="Adenylat/UMP-CMP_kin"/>
</dbReference>
<dbReference type="InterPro" id="IPR033690">
    <property type="entry name" value="Adenylat_kinase_CS"/>
</dbReference>
<dbReference type="InterPro" id="IPR007862">
    <property type="entry name" value="Adenylate_kinase_lid-dom"/>
</dbReference>
<dbReference type="InterPro" id="IPR027417">
    <property type="entry name" value="P-loop_NTPase"/>
</dbReference>
<dbReference type="NCBIfam" id="TIGR01351">
    <property type="entry name" value="adk"/>
    <property type="match status" value="1"/>
</dbReference>
<dbReference type="NCBIfam" id="NF001380">
    <property type="entry name" value="PRK00279.1-2"/>
    <property type="match status" value="1"/>
</dbReference>
<dbReference type="NCBIfam" id="NF001381">
    <property type="entry name" value="PRK00279.1-3"/>
    <property type="match status" value="1"/>
</dbReference>
<dbReference type="NCBIfam" id="NF011100">
    <property type="entry name" value="PRK14527.1"/>
    <property type="match status" value="1"/>
</dbReference>
<dbReference type="PANTHER" id="PTHR23359">
    <property type="entry name" value="NUCLEOTIDE KINASE"/>
    <property type="match status" value="1"/>
</dbReference>
<dbReference type="Pfam" id="PF00406">
    <property type="entry name" value="ADK"/>
    <property type="match status" value="1"/>
</dbReference>
<dbReference type="Pfam" id="PF05191">
    <property type="entry name" value="ADK_lid"/>
    <property type="match status" value="1"/>
</dbReference>
<dbReference type="PRINTS" id="PR00094">
    <property type="entry name" value="ADENYLTKNASE"/>
</dbReference>
<dbReference type="SUPFAM" id="SSF52540">
    <property type="entry name" value="P-loop containing nucleoside triphosphate hydrolases"/>
    <property type="match status" value="1"/>
</dbReference>
<dbReference type="PROSITE" id="PS00113">
    <property type="entry name" value="ADENYLATE_KINASE"/>
    <property type="match status" value="1"/>
</dbReference>
<sequence length="211" mass="24126">MILVLLGPPGSGKGTQGALLKSELSFEHISTGDMLRAEVSKKSPLGLKAEEYMKQGLLVPDDLIIAMIKNILTEAPHKNYVFDGFPRNVNQAEAFETMLNTMRLQVDKVFYFDLEDDVIIKRLSGRRVCPKCGATYNIYYQKPKNDTLCDNDATPLIQRDDDKEEVIVNRLRVYKEQTFPLIEYYKYKNKLFVVSADGTQEEVFEKLKSML</sequence>
<keyword id="KW-0067">ATP-binding</keyword>
<keyword id="KW-0963">Cytoplasm</keyword>
<keyword id="KW-0418">Kinase</keyword>
<keyword id="KW-0479">Metal-binding</keyword>
<keyword id="KW-0545">Nucleotide biosynthesis</keyword>
<keyword id="KW-0547">Nucleotide-binding</keyword>
<keyword id="KW-0808">Transferase</keyword>
<keyword id="KW-0862">Zinc</keyword>
<name>KAD_HYDS0</name>
<evidence type="ECO:0000255" key="1">
    <source>
        <dbReference type="HAMAP-Rule" id="MF_00235"/>
    </source>
</evidence>
<accession>B4U765</accession>
<organism>
    <name type="scientific">Hydrogenobaculum sp. (strain Y04AAS1)</name>
    <dbReference type="NCBI Taxonomy" id="380749"/>
    <lineage>
        <taxon>Bacteria</taxon>
        <taxon>Pseudomonadati</taxon>
        <taxon>Aquificota</taxon>
        <taxon>Aquificia</taxon>
        <taxon>Aquificales</taxon>
        <taxon>Aquificaceae</taxon>
        <taxon>Hydrogenobaculum</taxon>
    </lineage>
</organism>
<reference key="1">
    <citation type="journal article" date="2009" name="J. Bacteriol.">
        <title>Complete and draft genome sequences of six members of the Aquificales.</title>
        <authorList>
            <person name="Reysenbach A.-L."/>
            <person name="Hamamura N."/>
            <person name="Podar M."/>
            <person name="Griffiths E."/>
            <person name="Ferreira S."/>
            <person name="Hochstein R."/>
            <person name="Heidelberg J."/>
            <person name="Johnson J."/>
            <person name="Mead D."/>
            <person name="Pohorille A."/>
            <person name="Sarmiento M."/>
            <person name="Schweighofer K."/>
            <person name="Seshadri R."/>
            <person name="Voytek M.A."/>
        </authorList>
    </citation>
    <scope>NUCLEOTIDE SEQUENCE [LARGE SCALE GENOMIC DNA]</scope>
    <source>
        <strain>Y04AAS1</strain>
    </source>
</reference>
<proteinExistence type="inferred from homology"/>
<comment type="function">
    <text evidence="1">Catalyzes the reversible transfer of the terminal phosphate group between ATP and AMP. Plays an important role in cellular energy homeostasis and in adenine nucleotide metabolism.</text>
</comment>
<comment type="catalytic activity">
    <reaction evidence="1">
        <text>AMP + ATP = 2 ADP</text>
        <dbReference type="Rhea" id="RHEA:12973"/>
        <dbReference type="ChEBI" id="CHEBI:30616"/>
        <dbReference type="ChEBI" id="CHEBI:456215"/>
        <dbReference type="ChEBI" id="CHEBI:456216"/>
        <dbReference type="EC" id="2.7.4.3"/>
    </reaction>
</comment>
<comment type="pathway">
    <text evidence="1">Purine metabolism; AMP biosynthesis via salvage pathway; AMP from ADP: step 1/1.</text>
</comment>
<comment type="subunit">
    <text evidence="1">Monomer.</text>
</comment>
<comment type="subcellular location">
    <subcellularLocation>
        <location evidence="1">Cytoplasm</location>
    </subcellularLocation>
</comment>
<comment type="domain">
    <text evidence="1">Consists of three domains, a large central CORE domain and two small peripheral domains, NMPbind and LID, which undergo movements during catalysis. The LID domain closes over the site of phosphoryl transfer upon ATP binding. Assembling and dissambling the active center during each catalytic cycle provides an effective means to prevent ATP hydrolysis. Some bacteria have evolved a zinc-coordinating structure that stabilizes the LID domain.</text>
</comment>
<comment type="similarity">
    <text evidence="1">Belongs to the adenylate kinase family.</text>
</comment>
<protein>
    <recommendedName>
        <fullName evidence="1">Adenylate kinase</fullName>
        <shortName evidence="1">AK</shortName>
        <ecNumber evidence="1">2.7.4.3</ecNumber>
    </recommendedName>
    <alternativeName>
        <fullName evidence="1">ATP-AMP transphosphorylase</fullName>
    </alternativeName>
    <alternativeName>
        <fullName evidence="1">ATP:AMP phosphotransferase</fullName>
    </alternativeName>
    <alternativeName>
        <fullName evidence="1">Adenylate monophosphate kinase</fullName>
    </alternativeName>
</protein>
<feature type="chain" id="PRO_1000100572" description="Adenylate kinase">
    <location>
        <begin position="1"/>
        <end position="211"/>
    </location>
</feature>
<feature type="region of interest" description="NMP" evidence="1">
    <location>
        <begin position="30"/>
        <end position="59"/>
    </location>
</feature>
<feature type="region of interest" description="LID" evidence="1">
    <location>
        <begin position="125"/>
        <end position="162"/>
    </location>
</feature>
<feature type="binding site" evidence="1">
    <location>
        <begin position="10"/>
        <end position="15"/>
    </location>
    <ligand>
        <name>ATP</name>
        <dbReference type="ChEBI" id="CHEBI:30616"/>
    </ligand>
</feature>
<feature type="binding site" evidence="1">
    <location>
        <position position="31"/>
    </location>
    <ligand>
        <name>AMP</name>
        <dbReference type="ChEBI" id="CHEBI:456215"/>
    </ligand>
</feature>
<feature type="binding site" evidence="1">
    <location>
        <position position="36"/>
    </location>
    <ligand>
        <name>AMP</name>
        <dbReference type="ChEBI" id="CHEBI:456215"/>
    </ligand>
</feature>
<feature type="binding site" evidence="1">
    <location>
        <begin position="57"/>
        <end position="59"/>
    </location>
    <ligand>
        <name>AMP</name>
        <dbReference type="ChEBI" id="CHEBI:456215"/>
    </ligand>
</feature>
<feature type="binding site" evidence="1">
    <location>
        <begin position="84"/>
        <end position="87"/>
    </location>
    <ligand>
        <name>AMP</name>
        <dbReference type="ChEBI" id="CHEBI:456215"/>
    </ligand>
</feature>
<feature type="binding site" evidence="1">
    <location>
        <position position="91"/>
    </location>
    <ligand>
        <name>AMP</name>
        <dbReference type="ChEBI" id="CHEBI:456215"/>
    </ligand>
</feature>
<feature type="binding site" evidence="1">
    <location>
        <position position="126"/>
    </location>
    <ligand>
        <name>ATP</name>
        <dbReference type="ChEBI" id="CHEBI:30616"/>
    </ligand>
</feature>
<feature type="binding site" evidence="1">
    <location>
        <position position="129"/>
    </location>
    <ligand>
        <name>Zn(2+)</name>
        <dbReference type="ChEBI" id="CHEBI:29105"/>
        <note>structural</note>
    </ligand>
</feature>
<feature type="binding site" evidence="1">
    <location>
        <position position="132"/>
    </location>
    <ligand>
        <name>Zn(2+)</name>
        <dbReference type="ChEBI" id="CHEBI:29105"/>
        <note>structural</note>
    </ligand>
</feature>
<feature type="binding site" evidence="1">
    <location>
        <begin position="135"/>
        <end position="136"/>
    </location>
    <ligand>
        <name>ATP</name>
        <dbReference type="ChEBI" id="CHEBI:30616"/>
    </ligand>
</feature>
<feature type="binding site" evidence="1">
    <location>
        <position position="149"/>
    </location>
    <ligand>
        <name>Zn(2+)</name>
        <dbReference type="ChEBI" id="CHEBI:29105"/>
        <note>structural</note>
    </ligand>
</feature>
<feature type="binding site" evidence="1">
    <location>
        <position position="152"/>
    </location>
    <ligand>
        <name>Zn(2+)</name>
        <dbReference type="ChEBI" id="CHEBI:29105"/>
        <note>structural</note>
    </ligand>
</feature>
<feature type="binding site" evidence="1">
    <location>
        <position position="159"/>
    </location>
    <ligand>
        <name>AMP</name>
        <dbReference type="ChEBI" id="CHEBI:456215"/>
    </ligand>
</feature>
<feature type="binding site" evidence="1">
    <location>
        <position position="170"/>
    </location>
    <ligand>
        <name>AMP</name>
        <dbReference type="ChEBI" id="CHEBI:456215"/>
    </ligand>
</feature>
<feature type="binding site" evidence="1">
    <location>
        <position position="198"/>
    </location>
    <ligand>
        <name>ATP</name>
        <dbReference type="ChEBI" id="CHEBI:30616"/>
    </ligand>
</feature>
<gene>
    <name evidence="1" type="primary">adk</name>
    <name type="ordered locus">HY04AAS1_0286</name>
</gene>